<sequence length="298" mass="34265">MATKIELIKELRKSTQASVMDCKQALEKNNDDFEKAVKWLRENGIVKSTKKLNKVASEGIIVLKSNLHKAIMVEINSQTDFVAKNQELKEFSDLMLEKIFEKVNPKTELVEIEKIQINNDEKVSEKLALIASKTDEKIVLRRVVVFETKTNQIFTYLHANKRIGVIIEIQGKLNEDDGKHLAMHIAANSPQFIDQSDVNQTWLQNERNIIRSQAELEVKENPKKAIFLEKTIEGRVNKLLIDTCLINQKYLIDETKTIGQFLKEKQAKVLKFIRYEVGEGIIKETVDFVSEVNAQIKQ</sequence>
<protein>
    <recommendedName>
        <fullName>Elongation factor Ts</fullName>
        <shortName>EF-Ts</shortName>
    </recommendedName>
</protein>
<proteinExistence type="inferred from homology"/>
<evidence type="ECO:0000250" key="1"/>
<evidence type="ECO:0000305" key="2"/>
<accession>P47246</accession>
<keyword id="KW-0963">Cytoplasm</keyword>
<keyword id="KW-0251">Elongation factor</keyword>
<keyword id="KW-0648">Protein biosynthesis</keyword>
<keyword id="KW-1185">Reference proteome</keyword>
<comment type="function">
    <text evidence="1">Associates with the EF-Tu.GDP complex and induces the exchange of GDP to GTP. It remains bound to the aminoacyl-tRNA.EF-Tu.GTP complex up to the GTP hydrolysis stage on the ribosome (By similarity).</text>
</comment>
<comment type="subcellular location">
    <subcellularLocation>
        <location evidence="1">Cytoplasm</location>
    </subcellularLocation>
</comment>
<comment type="similarity">
    <text evidence="2">Belongs to the EF-Ts family.</text>
</comment>
<feature type="chain" id="PRO_0000161151" description="Elongation factor Ts">
    <location>
        <begin position="1"/>
        <end position="298"/>
    </location>
</feature>
<feature type="region of interest" description="Involved in Mg(2+) ion dislocation from EF-Tu" evidence="1">
    <location>
        <begin position="79"/>
        <end position="82"/>
    </location>
</feature>
<gene>
    <name type="primary">tsf</name>
    <name type="ordered locus">MG433</name>
</gene>
<dbReference type="EMBL" id="L43967">
    <property type="protein sequence ID" value="AAC72454.1"/>
    <property type="molecule type" value="Genomic_DNA"/>
</dbReference>
<dbReference type="PIR" id="H64247">
    <property type="entry name" value="H64247"/>
</dbReference>
<dbReference type="RefSeq" id="WP_009885600.1">
    <property type="nucleotide sequence ID" value="NC_000908.2"/>
</dbReference>
<dbReference type="SMR" id="P47246"/>
<dbReference type="FunCoup" id="P47246">
    <property type="interactions" value="211"/>
</dbReference>
<dbReference type="STRING" id="243273.MG_433"/>
<dbReference type="GeneID" id="88282614"/>
<dbReference type="KEGG" id="mge:MG_433"/>
<dbReference type="eggNOG" id="COG0264">
    <property type="taxonomic scope" value="Bacteria"/>
</dbReference>
<dbReference type="HOGENOM" id="CLU_047155_0_2_14"/>
<dbReference type="InParanoid" id="P47246"/>
<dbReference type="OrthoDB" id="9808348at2"/>
<dbReference type="BioCyc" id="MGEN243273:G1GJ2-527-MONOMER"/>
<dbReference type="Proteomes" id="UP000000807">
    <property type="component" value="Chromosome"/>
</dbReference>
<dbReference type="GO" id="GO:0005737">
    <property type="term" value="C:cytoplasm"/>
    <property type="evidence" value="ECO:0007669"/>
    <property type="project" value="UniProtKB-SubCell"/>
</dbReference>
<dbReference type="GO" id="GO:0003746">
    <property type="term" value="F:translation elongation factor activity"/>
    <property type="evidence" value="ECO:0000318"/>
    <property type="project" value="GO_Central"/>
</dbReference>
<dbReference type="GO" id="GO:0006414">
    <property type="term" value="P:translational elongation"/>
    <property type="evidence" value="ECO:0000318"/>
    <property type="project" value="GO_Central"/>
</dbReference>
<dbReference type="CDD" id="cd14275">
    <property type="entry name" value="UBA_EF-Ts"/>
    <property type="match status" value="1"/>
</dbReference>
<dbReference type="FunFam" id="1.10.8.10:FF:000001">
    <property type="entry name" value="Elongation factor Ts"/>
    <property type="match status" value="1"/>
</dbReference>
<dbReference type="Gene3D" id="1.10.286.20">
    <property type="match status" value="1"/>
</dbReference>
<dbReference type="Gene3D" id="1.10.8.10">
    <property type="entry name" value="DNA helicase RuvA subunit, C-terminal domain"/>
    <property type="match status" value="1"/>
</dbReference>
<dbReference type="Gene3D" id="3.30.479.20">
    <property type="entry name" value="Elongation factor Ts, dimerisation domain"/>
    <property type="match status" value="2"/>
</dbReference>
<dbReference type="HAMAP" id="MF_00050">
    <property type="entry name" value="EF_Ts"/>
    <property type="match status" value="1"/>
</dbReference>
<dbReference type="InterPro" id="IPR036402">
    <property type="entry name" value="EF-Ts_dimer_sf"/>
</dbReference>
<dbReference type="InterPro" id="IPR001816">
    <property type="entry name" value="Transl_elong_EFTs/EF1B"/>
</dbReference>
<dbReference type="InterPro" id="IPR014039">
    <property type="entry name" value="Transl_elong_EFTs/EF1B_dimer"/>
</dbReference>
<dbReference type="InterPro" id="IPR018101">
    <property type="entry name" value="Transl_elong_Ts_CS"/>
</dbReference>
<dbReference type="InterPro" id="IPR009060">
    <property type="entry name" value="UBA-like_sf"/>
</dbReference>
<dbReference type="NCBIfam" id="TIGR00116">
    <property type="entry name" value="tsf"/>
    <property type="match status" value="1"/>
</dbReference>
<dbReference type="PANTHER" id="PTHR11741">
    <property type="entry name" value="ELONGATION FACTOR TS"/>
    <property type="match status" value="1"/>
</dbReference>
<dbReference type="PANTHER" id="PTHR11741:SF0">
    <property type="entry name" value="ELONGATION FACTOR TS, MITOCHONDRIAL"/>
    <property type="match status" value="1"/>
</dbReference>
<dbReference type="Pfam" id="PF00889">
    <property type="entry name" value="EF_TS"/>
    <property type="match status" value="1"/>
</dbReference>
<dbReference type="SUPFAM" id="SSF54713">
    <property type="entry name" value="Elongation factor Ts (EF-Ts), dimerisation domain"/>
    <property type="match status" value="2"/>
</dbReference>
<dbReference type="SUPFAM" id="SSF46934">
    <property type="entry name" value="UBA-like"/>
    <property type="match status" value="1"/>
</dbReference>
<dbReference type="PROSITE" id="PS01126">
    <property type="entry name" value="EF_TS_1"/>
    <property type="match status" value="1"/>
</dbReference>
<dbReference type="PROSITE" id="PS01127">
    <property type="entry name" value="EF_TS_2"/>
    <property type="match status" value="1"/>
</dbReference>
<reference key="1">
    <citation type="journal article" date="1995" name="Science">
        <title>The minimal gene complement of Mycoplasma genitalium.</title>
        <authorList>
            <person name="Fraser C.M."/>
            <person name="Gocayne J.D."/>
            <person name="White O."/>
            <person name="Adams M.D."/>
            <person name="Clayton R.A."/>
            <person name="Fleischmann R.D."/>
            <person name="Bult C.J."/>
            <person name="Kerlavage A.R."/>
            <person name="Sutton G.G."/>
            <person name="Kelley J.M."/>
            <person name="Fritchman J.L."/>
            <person name="Weidman J.F."/>
            <person name="Small K.V."/>
            <person name="Sandusky M."/>
            <person name="Fuhrmann J.L."/>
            <person name="Nguyen D.T."/>
            <person name="Utterback T.R."/>
            <person name="Saudek D.M."/>
            <person name="Phillips C.A."/>
            <person name="Merrick J.M."/>
            <person name="Tomb J.-F."/>
            <person name="Dougherty B.A."/>
            <person name="Bott K.F."/>
            <person name="Hu P.-C."/>
            <person name="Lucier T.S."/>
            <person name="Peterson S.N."/>
            <person name="Smith H.O."/>
            <person name="Hutchison C.A. III"/>
            <person name="Venter J.C."/>
        </authorList>
    </citation>
    <scope>NUCLEOTIDE SEQUENCE [LARGE SCALE GENOMIC DNA]</scope>
    <source>
        <strain>ATCC 33530 / DSM 19775 / NCTC 10195 / G37</strain>
    </source>
</reference>
<name>EFTS_MYCGE</name>
<organism>
    <name type="scientific">Mycoplasma genitalium (strain ATCC 33530 / DSM 19775 / NCTC 10195 / G37)</name>
    <name type="common">Mycoplasmoides genitalium</name>
    <dbReference type="NCBI Taxonomy" id="243273"/>
    <lineage>
        <taxon>Bacteria</taxon>
        <taxon>Bacillati</taxon>
        <taxon>Mycoplasmatota</taxon>
        <taxon>Mycoplasmoidales</taxon>
        <taxon>Mycoplasmoidaceae</taxon>
        <taxon>Mycoplasmoides</taxon>
    </lineage>
</organism>